<feature type="chain" id="PRO_1000099001" description="NH(3)-dependent NAD(+) synthetase">
    <location>
        <begin position="1"/>
        <end position="282"/>
    </location>
</feature>
<feature type="binding site" evidence="1">
    <location>
        <begin position="51"/>
        <end position="58"/>
    </location>
    <ligand>
        <name>ATP</name>
        <dbReference type="ChEBI" id="CHEBI:30616"/>
    </ligand>
</feature>
<feature type="binding site" evidence="1">
    <location>
        <position position="57"/>
    </location>
    <ligand>
        <name>Mg(2+)</name>
        <dbReference type="ChEBI" id="CHEBI:18420"/>
    </ligand>
</feature>
<feature type="binding site" evidence="1">
    <location>
        <position position="148"/>
    </location>
    <ligand>
        <name>deamido-NAD(+)</name>
        <dbReference type="ChEBI" id="CHEBI:58437"/>
    </ligand>
</feature>
<feature type="binding site" evidence="1">
    <location>
        <position position="168"/>
    </location>
    <ligand>
        <name>ATP</name>
        <dbReference type="ChEBI" id="CHEBI:30616"/>
    </ligand>
</feature>
<feature type="binding site" evidence="1">
    <location>
        <position position="173"/>
    </location>
    <ligand>
        <name>Mg(2+)</name>
        <dbReference type="ChEBI" id="CHEBI:18420"/>
    </ligand>
</feature>
<feature type="binding site" evidence="1">
    <location>
        <position position="181"/>
    </location>
    <ligand>
        <name>deamido-NAD(+)</name>
        <dbReference type="ChEBI" id="CHEBI:58437"/>
    </ligand>
</feature>
<feature type="binding site" evidence="1">
    <location>
        <position position="188"/>
    </location>
    <ligand>
        <name>deamido-NAD(+)</name>
        <dbReference type="ChEBI" id="CHEBI:58437"/>
    </ligand>
</feature>
<feature type="binding site" evidence="1">
    <location>
        <position position="197"/>
    </location>
    <ligand>
        <name>ATP</name>
        <dbReference type="ChEBI" id="CHEBI:30616"/>
    </ligand>
</feature>
<feature type="binding site" evidence="1">
    <location>
        <position position="219"/>
    </location>
    <ligand>
        <name>ATP</name>
        <dbReference type="ChEBI" id="CHEBI:30616"/>
    </ligand>
</feature>
<feature type="binding site" evidence="1">
    <location>
        <begin position="268"/>
        <end position="269"/>
    </location>
    <ligand>
        <name>deamido-NAD(+)</name>
        <dbReference type="ChEBI" id="CHEBI:58437"/>
    </ligand>
</feature>
<protein>
    <recommendedName>
        <fullName evidence="1">NH(3)-dependent NAD(+) synthetase</fullName>
        <ecNumber evidence="1">6.3.1.5</ecNumber>
    </recommendedName>
</protein>
<organism>
    <name type="scientific">Burkholderia ambifaria (strain MC40-6)</name>
    <dbReference type="NCBI Taxonomy" id="398577"/>
    <lineage>
        <taxon>Bacteria</taxon>
        <taxon>Pseudomonadati</taxon>
        <taxon>Pseudomonadota</taxon>
        <taxon>Betaproteobacteria</taxon>
        <taxon>Burkholderiales</taxon>
        <taxon>Burkholderiaceae</taxon>
        <taxon>Burkholderia</taxon>
        <taxon>Burkholderia cepacia complex</taxon>
    </lineage>
</organism>
<gene>
    <name evidence="1" type="primary">nadE</name>
    <name type="ordered locus">BamMC406_5167</name>
</gene>
<sequence length="282" mass="30727">MTSADYASRQRAIIAELNVAPHFDVDADIARRVDFLAQYLRSSGLRTYVLGISGGVDSSTAGRLAQLAVEQLRAGGYDARFIAMRLPNGVQNDEADAQRALAFVRADETFTVDVKPAADAMLASLVASGHAFETPAQQDFVHGNIKARERMIAQYAVAGARRGIVIGTDHAAESLMGFFTKFGDGGADVLPLAGLSKRRVRAVARALGGDELIVMKVPTADLEELRPLRPDEHAYGVTYDEIDDFLEGKTVSDTVYETVLRFYDGSRHKRALPYTLFDWPTA</sequence>
<keyword id="KW-0067">ATP-binding</keyword>
<keyword id="KW-0436">Ligase</keyword>
<keyword id="KW-0460">Magnesium</keyword>
<keyword id="KW-0479">Metal-binding</keyword>
<keyword id="KW-0520">NAD</keyword>
<keyword id="KW-0547">Nucleotide-binding</keyword>
<evidence type="ECO:0000255" key="1">
    <source>
        <dbReference type="HAMAP-Rule" id="MF_00193"/>
    </source>
</evidence>
<accession>B1Z0R0</accession>
<dbReference type="EC" id="6.3.1.5" evidence="1"/>
<dbReference type="EMBL" id="CP001026">
    <property type="protein sequence ID" value="ACB67612.1"/>
    <property type="molecule type" value="Genomic_DNA"/>
</dbReference>
<dbReference type="RefSeq" id="WP_012366857.1">
    <property type="nucleotide sequence ID" value="NC_010552.1"/>
</dbReference>
<dbReference type="SMR" id="B1Z0R0"/>
<dbReference type="KEGG" id="bac:BamMC406_5167"/>
<dbReference type="HOGENOM" id="CLU_059327_3_0_4"/>
<dbReference type="OrthoDB" id="3266517at2"/>
<dbReference type="UniPathway" id="UPA00253">
    <property type="reaction ID" value="UER00333"/>
</dbReference>
<dbReference type="Proteomes" id="UP000001680">
    <property type="component" value="Chromosome 2"/>
</dbReference>
<dbReference type="GO" id="GO:0005737">
    <property type="term" value="C:cytoplasm"/>
    <property type="evidence" value="ECO:0007669"/>
    <property type="project" value="InterPro"/>
</dbReference>
<dbReference type="GO" id="GO:0005524">
    <property type="term" value="F:ATP binding"/>
    <property type="evidence" value="ECO:0007669"/>
    <property type="project" value="UniProtKB-UniRule"/>
</dbReference>
<dbReference type="GO" id="GO:0004359">
    <property type="term" value="F:glutaminase activity"/>
    <property type="evidence" value="ECO:0007669"/>
    <property type="project" value="InterPro"/>
</dbReference>
<dbReference type="GO" id="GO:0046872">
    <property type="term" value="F:metal ion binding"/>
    <property type="evidence" value="ECO:0007669"/>
    <property type="project" value="UniProtKB-KW"/>
</dbReference>
<dbReference type="GO" id="GO:0003952">
    <property type="term" value="F:NAD+ synthase (glutamine-hydrolyzing) activity"/>
    <property type="evidence" value="ECO:0007669"/>
    <property type="project" value="InterPro"/>
</dbReference>
<dbReference type="GO" id="GO:0008795">
    <property type="term" value="F:NAD+ synthase activity"/>
    <property type="evidence" value="ECO:0007669"/>
    <property type="project" value="UniProtKB-UniRule"/>
</dbReference>
<dbReference type="GO" id="GO:0009435">
    <property type="term" value="P:NAD biosynthetic process"/>
    <property type="evidence" value="ECO:0007669"/>
    <property type="project" value="UniProtKB-UniRule"/>
</dbReference>
<dbReference type="CDD" id="cd00553">
    <property type="entry name" value="NAD_synthase"/>
    <property type="match status" value="1"/>
</dbReference>
<dbReference type="Gene3D" id="3.40.50.620">
    <property type="entry name" value="HUPs"/>
    <property type="match status" value="1"/>
</dbReference>
<dbReference type="HAMAP" id="MF_00193">
    <property type="entry name" value="NadE_ammonia_dep"/>
    <property type="match status" value="1"/>
</dbReference>
<dbReference type="InterPro" id="IPR022310">
    <property type="entry name" value="NAD/GMP_synthase"/>
</dbReference>
<dbReference type="InterPro" id="IPR003694">
    <property type="entry name" value="NAD_synthase"/>
</dbReference>
<dbReference type="InterPro" id="IPR022926">
    <property type="entry name" value="NH(3)-dep_NAD(+)_synth"/>
</dbReference>
<dbReference type="InterPro" id="IPR014729">
    <property type="entry name" value="Rossmann-like_a/b/a_fold"/>
</dbReference>
<dbReference type="NCBIfam" id="TIGR00552">
    <property type="entry name" value="nadE"/>
    <property type="match status" value="1"/>
</dbReference>
<dbReference type="NCBIfam" id="NF001979">
    <property type="entry name" value="PRK00768.1"/>
    <property type="match status" value="1"/>
</dbReference>
<dbReference type="PANTHER" id="PTHR23090">
    <property type="entry name" value="NH 3 /GLUTAMINE-DEPENDENT NAD + SYNTHETASE"/>
    <property type="match status" value="1"/>
</dbReference>
<dbReference type="PANTHER" id="PTHR23090:SF7">
    <property type="entry name" value="NH(3)-DEPENDENT NAD(+) SYNTHETASE"/>
    <property type="match status" value="1"/>
</dbReference>
<dbReference type="Pfam" id="PF02540">
    <property type="entry name" value="NAD_synthase"/>
    <property type="match status" value="1"/>
</dbReference>
<dbReference type="SUPFAM" id="SSF52402">
    <property type="entry name" value="Adenine nucleotide alpha hydrolases-like"/>
    <property type="match status" value="1"/>
</dbReference>
<reference key="1">
    <citation type="submission" date="2008-04" db="EMBL/GenBank/DDBJ databases">
        <title>Complete sequence of chromosome 2 of Burkholderia ambifaria MC40-6.</title>
        <authorList>
            <person name="Copeland A."/>
            <person name="Lucas S."/>
            <person name="Lapidus A."/>
            <person name="Glavina del Rio T."/>
            <person name="Dalin E."/>
            <person name="Tice H."/>
            <person name="Pitluck S."/>
            <person name="Chain P."/>
            <person name="Malfatti S."/>
            <person name="Shin M."/>
            <person name="Vergez L."/>
            <person name="Lang D."/>
            <person name="Schmutz J."/>
            <person name="Larimer F."/>
            <person name="Land M."/>
            <person name="Hauser L."/>
            <person name="Kyrpides N."/>
            <person name="Lykidis A."/>
            <person name="Ramette A."/>
            <person name="Konstantinidis K."/>
            <person name="Tiedje J."/>
            <person name="Richardson P."/>
        </authorList>
    </citation>
    <scope>NUCLEOTIDE SEQUENCE [LARGE SCALE GENOMIC DNA]</scope>
    <source>
        <strain>MC40-6</strain>
    </source>
</reference>
<comment type="function">
    <text evidence="1">Catalyzes the ATP-dependent amidation of deamido-NAD to form NAD. Uses ammonia as a nitrogen source.</text>
</comment>
<comment type="catalytic activity">
    <reaction evidence="1">
        <text>deamido-NAD(+) + NH4(+) + ATP = AMP + diphosphate + NAD(+) + H(+)</text>
        <dbReference type="Rhea" id="RHEA:21188"/>
        <dbReference type="ChEBI" id="CHEBI:15378"/>
        <dbReference type="ChEBI" id="CHEBI:28938"/>
        <dbReference type="ChEBI" id="CHEBI:30616"/>
        <dbReference type="ChEBI" id="CHEBI:33019"/>
        <dbReference type="ChEBI" id="CHEBI:57540"/>
        <dbReference type="ChEBI" id="CHEBI:58437"/>
        <dbReference type="ChEBI" id="CHEBI:456215"/>
        <dbReference type="EC" id="6.3.1.5"/>
    </reaction>
</comment>
<comment type="pathway">
    <text evidence="1">Cofactor biosynthesis; NAD(+) biosynthesis; NAD(+) from deamido-NAD(+) (ammonia route): step 1/1.</text>
</comment>
<comment type="subunit">
    <text evidence="1">Homodimer.</text>
</comment>
<comment type="similarity">
    <text evidence="1">Belongs to the NAD synthetase family.</text>
</comment>
<name>NADE_BURA4</name>
<proteinExistence type="inferred from homology"/>